<evidence type="ECO:0000269" key="1">
    <source>
    </source>
</evidence>
<evidence type="ECO:0000303" key="2">
    <source>
    </source>
</evidence>
<evidence type="ECO:0000305" key="3"/>
<evidence type="ECO:0000305" key="4">
    <source>
    </source>
</evidence>
<dbReference type="EMBL" id="AM690769">
    <property type="protein sequence ID" value="CAM84437.1"/>
    <property type="molecule type" value="Genomic_DNA"/>
</dbReference>
<dbReference type="SMR" id="B1GT61"/>
<dbReference type="GO" id="GO:0005576">
    <property type="term" value="C:extracellular region"/>
    <property type="evidence" value="ECO:0007669"/>
    <property type="project" value="UniProtKB-KW"/>
</dbReference>
<dbReference type="GO" id="GO:0030115">
    <property type="term" value="C:S-layer"/>
    <property type="evidence" value="ECO:0007669"/>
    <property type="project" value="UniProtKB-SubCell"/>
</dbReference>
<protein>
    <recommendedName>
        <fullName evidence="2">S-layer protein A</fullName>
    </recommendedName>
    <alternativeName>
        <fullName evidence="3">Surface layer large protein</fullName>
    </alternativeName>
</protein>
<organism>
    <name type="scientific">Acidianus ambivalens</name>
    <name type="common">Desulfurolobus ambivalens</name>
    <dbReference type="NCBI Taxonomy" id="2283"/>
    <lineage>
        <taxon>Archaea</taxon>
        <taxon>Thermoproteota</taxon>
        <taxon>Thermoprotei</taxon>
        <taxon>Sulfolobales</taxon>
        <taxon>Sulfolobaceae</taxon>
        <taxon>Acidianus</taxon>
    </lineage>
</organism>
<sequence>MDLSTKKVISAGLVFIYALSLAMLVPMFLASNQGVISAVINPATGGNCLPGRYSGIVQASGVTLPAVNLSYVAPFTSALPLLVYSQSIFNGTLYYYNSTGSYELMKKYGISITPVHQIVNVTSRFFARTTEGVIPNTLPPYTSGNCYLFNTTPPTPFYYSYRTLAMVNSYFPNTQYINTSSEISDLYFNVSYLPYNTTLTLSIYATPALQGIEGIIRFNFSVKLCANSTIYPYAEYTLHAYFYFNNSFICELENIKTSIPGVASATSPTTIHFTSTAVNYILLVDLGLWSNVSTVYVTGVEGATYPSDTVATTINNGSFHPVIIPPAICIQYKTFYSNQINPELPNTSGPDSIPYMIANVTIYSPDDMLNWTYAQKYVGCIAAEYANPKWNPYCKINEAWYNNYGHGGNGLTVTLMVGNNKVLSINYPYLALCHVSYTDGFHNFVYKFSIEFLLSSVDNITYMLTTVAPNSTGLGGDMLYVLIKPCQLKDATILLTYNDSDYAVQHYFGPVDREIAVVCNNIKVYTPLLYMPKCVPISTPFFYGQVIDYDYGYNYALVGYVNTYYFNATSHQYYKVGQYVDVQHVSGDSELVLGVCPGYKCASLSIYYPNTPPYYPASHEAKVGKIMGICIEFANGTMERIYLSPSNITALLTTNVMKQMAPMPPFWNYSFEISITGLESILHITPNQALTVLNNSYIIVCYYDIASNSTVHNMTKLVSTPVTVAISPPSQAFYYAPATPFDDIVHPGCQIFYFVNVNATYPITVTLTDKSLGELSPTTIVTTTVTCIYVILYNGTMLHYNSAVFPITLTETAPSSGVFTATLYVEVTNSKGTPVTAYPLNYSYIAIYNPATKMQIIVGKLSNIMPLVPSKYFKVGVVVDGLSANSTFTLTEIPNVIYNVSPIIYNYIDGELSVTVAANIPGYYYSGYLVLTIYNCTAKPCHPIYTYEIYFNFSATSPHFVAAYDLLFLEPILNGHTYYITITAIVVPLTYEPFTTIGFEGKVFSGAYFFSAPAGS</sequence>
<accession>B1GT61</accession>
<feature type="signal peptide" evidence="1">
    <location>
        <begin position="1"/>
        <end position="30"/>
    </location>
</feature>
<feature type="chain" id="PRO_0000444049" description="S-layer protein A">
    <location>
        <begin position="31"/>
        <end position="1016"/>
    </location>
</feature>
<comment type="function">
    <text evidence="1">S-layer large protein. May form the highly ordered outer sheath.</text>
</comment>
<comment type="subunit">
    <text evidence="4">The mushroom-shaped unit cells of the Sulfolobales' S-layers may consist of three SlaB subunits and six SlaA subunits.</text>
</comment>
<comment type="subcellular location">
    <subcellularLocation>
        <location evidence="1">Secreted</location>
        <location evidence="1">Cell wall</location>
        <location evidence="1">S-layer</location>
    </subcellularLocation>
</comment>
<comment type="induction">
    <text evidence="1">Constitutively expressed. The level of slaA transcription is much higher than slaB.</text>
</comment>
<comment type="similarity">
    <text evidence="3">Belongs to the Sulfolobales SlaA family.</text>
</comment>
<keyword id="KW-0134">Cell wall</keyword>
<keyword id="KW-0903">Direct protein sequencing</keyword>
<keyword id="KW-0701">S-layer</keyword>
<keyword id="KW-0964">Secreted</keyword>
<keyword id="KW-0732">Signal</keyword>
<gene>
    <name evidence="2" type="primary">slaA</name>
</gene>
<proteinExistence type="evidence at protein level"/>
<reference key="1">
    <citation type="journal article" date="2009" name="Mol. Microbiol.">
        <title>Acidianus, Sulfolobus and Metallosphaera surface layers: structure, composition and gene expression.</title>
        <authorList>
            <person name="Veith A."/>
            <person name="Klingl A."/>
            <person name="Zolghadr B."/>
            <person name="Lauber K."/>
            <person name="Mentele R."/>
            <person name="Lottspeich F."/>
            <person name="Rachel R."/>
            <person name="Albers S.V."/>
            <person name="Kletzin A."/>
        </authorList>
    </citation>
    <scope>NUCLEOTIDE SEQUENCE [GENOMIC DNA]</scope>
    <scope>PROTEIN SEQUENCE OF 31-39</scope>
    <scope>FUNCTION</scope>
    <scope>SUBUNIT</scope>
    <scope>SUBCELLULAR LOCATION</scope>
    <scope>INDUCTION</scope>
    <source>
        <strain>Lei 10 / DSM 3772 / JCM 9191</strain>
    </source>
</reference>
<name>SLAA_ACIAM</name>